<evidence type="ECO:0000250" key="1"/>
<evidence type="ECO:0000250" key="2">
    <source>
        <dbReference type="UniProtKB" id="P14618"/>
    </source>
</evidence>
<evidence type="ECO:0000305" key="3"/>
<gene>
    <name type="primary">PYK</name>
</gene>
<sequence>MANPTHSQVVAAPDSSGRLLRLVSASSVMMQLLGKSTNIRMSQILEHHEDEDFSAHRTKIVCTMGPSCWDVDKMVQLIDAGMNVCRLNFSHGDHEAHGRVVKNLQEALKQRPGKRVALLLDTKGPEIRTGMLEGDKPIELHAGDMLKIVTDYSFVGNKSCIACSYEKLPSSVKPGNTILIADGSLSVEVVECGKDYVMTRVMNPAIIGNKKNMNLPGVKVDLPVIGEKDKNDILNFGIPMGCNFIAASFVQSADDVRYIRSILGTKGRNIKIIPKIENVEGLLNFDEILQEADGIMIARGDLGMEIPPEKVFLAQKMMISKCNVAGKPVITATQMLESMTKNPRPTRAEAADVANAVLDGTDCVMLSGETANGSFPVQAVTVMSRVCFEAEGCIDYQQVFRATCQATMTPIDTQEAVARAAVETAQSINASLILALTETGRTARLIAKYRPMQPILALSASEETIKQLQVIRGVTTFLVPTFQGTDQLIRNALSAAKELQLVSEGDSIVAVHGIKEEVAGWSNLLKVLVVE</sequence>
<reference key="1">
    <citation type="submission" date="1998-01" db="EMBL/GenBank/DDBJ databases">
        <title>Molecular cloning of the gene for pyruvate kinase of Eimeria tenella.</title>
        <authorList>
            <person name="Labbe M."/>
            <person name="Ouarzane M."/>
            <person name="Bourdieu C."/>
            <person name="Pery P."/>
        </authorList>
    </citation>
    <scope>NUCLEOTIDE SEQUENCE [MRNA]</scope>
    <source>
        <strain>PAPt38</strain>
    </source>
</reference>
<organism>
    <name type="scientific">Eimeria tenella</name>
    <name type="common">Coccidian parasite</name>
    <dbReference type="NCBI Taxonomy" id="5802"/>
    <lineage>
        <taxon>Eukaryota</taxon>
        <taxon>Sar</taxon>
        <taxon>Alveolata</taxon>
        <taxon>Apicomplexa</taxon>
        <taxon>Conoidasida</taxon>
        <taxon>Coccidia</taxon>
        <taxon>Eucoccidiorida</taxon>
        <taxon>Eimeriorina</taxon>
        <taxon>Eimeriidae</taxon>
        <taxon>Eimeria</taxon>
    </lineage>
</organism>
<feature type="chain" id="PRO_0000112100" description="Pyruvate kinase">
    <location>
        <begin position="1"/>
        <end position="531"/>
    </location>
</feature>
<feature type="binding site" evidence="1">
    <location>
        <position position="86"/>
    </location>
    <ligand>
        <name>substrate</name>
    </ligand>
</feature>
<feature type="binding site" evidence="2">
    <location>
        <begin position="88"/>
        <end position="91"/>
    </location>
    <ligand>
        <name>ATP</name>
        <dbReference type="ChEBI" id="CHEBI:30616"/>
    </ligand>
</feature>
<feature type="binding site" evidence="1">
    <location>
        <position position="88"/>
    </location>
    <ligand>
        <name>K(+)</name>
        <dbReference type="ChEBI" id="CHEBI:29103"/>
    </ligand>
</feature>
<feature type="binding site" evidence="1">
    <location>
        <position position="90"/>
    </location>
    <ligand>
        <name>K(+)</name>
        <dbReference type="ChEBI" id="CHEBI:29103"/>
    </ligand>
</feature>
<feature type="binding site" evidence="1">
    <location>
        <position position="121"/>
    </location>
    <ligand>
        <name>K(+)</name>
        <dbReference type="ChEBI" id="CHEBI:29103"/>
    </ligand>
</feature>
<feature type="binding site" evidence="1">
    <location>
        <position position="122"/>
    </location>
    <ligand>
        <name>K(+)</name>
        <dbReference type="ChEBI" id="CHEBI:29103"/>
    </ligand>
</feature>
<feature type="binding site" evidence="2">
    <location>
        <position position="128"/>
    </location>
    <ligand>
        <name>ATP</name>
        <dbReference type="ChEBI" id="CHEBI:30616"/>
    </ligand>
</feature>
<feature type="binding site" evidence="2">
    <location>
        <position position="211"/>
    </location>
    <ligand>
        <name>ATP</name>
        <dbReference type="ChEBI" id="CHEBI:30616"/>
    </ligand>
</feature>
<feature type="binding site" evidence="1">
    <location>
        <position position="277"/>
    </location>
    <ligand>
        <name>Mg(2+)</name>
        <dbReference type="ChEBI" id="CHEBI:18420"/>
    </ligand>
</feature>
<feature type="binding site" evidence="1">
    <location>
        <position position="300"/>
    </location>
    <ligand>
        <name>substrate</name>
    </ligand>
</feature>
<feature type="binding site" evidence="1">
    <location>
        <position position="301"/>
    </location>
    <ligand>
        <name>Mg(2+)</name>
        <dbReference type="ChEBI" id="CHEBI:18420"/>
    </ligand>
</feature>
<feature type="binding site" evidence="1">
    <location>
        <position position="301"/>
    </location>
    <ligand>
        <name>substrate</name>
    </ligand>
</feature>
<feature type="binding site" evidence="1">
    <location>
        <position position="333"/>
    </location>
    <ligand>
        <name>substrate</name>
    </ligand>
</feature>
<feature type="site" description="Transition state stabilizer" evidence="1">
    <location>
        <position position="275"/>
    </location>
</feature>
<name>KPYK_EIMTE</name>
<dbReference type="EC" id="2.7.1.40"/>
<dbReference type="EMBL" id="AF043910">
    <property type="protein sequence ID" value="AAC02529.1"/>
    <property type="molecule type" value="mRNA"/>
</dbReference>
<dbReference type="RefSeq" id="XP_013232798.1">
    <property type="nucleotide sequence ID" value="XM_013377344.1"/>
</dbReference>
<dbReference type="SMR" id="O44006"/>
<dbReference type="VEuPathDB" id="ToxoDB:ETH2_1149500"/>
<dbReference type="VEuPathDB" id="ToxoDB:ETH_00011145"/>
<dbReference type="OMA" id="RVHHIGE"/>
<dbReference type="OrthoDB" id="108365at2759"/>
<dbReference type="BRENDA" id="2.7.1.40">
    <property type="organism ID" value="2046"/>
</dbReference>
<dbReference type="UniPathway" id="UPA00109">
    <property type="reaction ID" value="UER00188"/>
</dbReference>
<dbReference type="GO" id="GO:0005524">
    <property type="term" value="F:ATP binding"/>
    <property type="evidence" value="ECO:0007669"/>
    <property type="project" value="UniProtKB-KW"/>
</dbReference>
<dbReference type="GO" id="GO:0016301">
    <property type="term" value="F:kinase activity"/>
    <property type="evidence" value="ECO:0007669"/>
    <property type="project" value="UniProtKB-KW"/>
</dbReference>
<dbReference type="GO" id="GO:0000287">
    <property type="term" value="F:magnesium ion binding"/>
    <property type="evidence" value="ECO:0007669"/>
    <property type="project" value="InterPro"/>
</dbReference>
<dbReference type="GO" id="GO:0030955">
    <property type="term" value="F:potassium ion binding"/>
    <property type="evidence" value="ECO:0007669"/>
    <property type="project" value="InterPro"/>
</dbReference>
<dbReference type="GO" id="GO:0004743">
    <property type="term" value="F:pyruvate kinase activity"/>
    <property type="evidence" value="ECO:0007669"/>
    <property type="project" value="UniProtKB-EC"/>
</dbReference>
<dbReference type="FunFam" id="2.40.33.10:FF:000001">
    <property type="entry name" value="Pyruvate kinase"/>
    <property type="match status" value="1"/>
</dbReference>
<dbReference type="FunFam" id="3.20.20.60:FF:000001">
    <property type="entry name" value="Pyruvate kinase"/>
    <property type="match status" value="1"/>
</dbReference>
<dbReference type="Gene3D" id="3.20.20.60">
    <property type="entry name" value="Phosphoenolpyruvate-binding domains"/>
    <property type="match status" value="1"/>
</dbReference>
<dbReference type="Gene3D" id="2.40.33.10">
    <property type="entry name" value="PK beta-barrel domain-like"/>
    <property type="match status" value="1"/>
</dbReference>
<dbReference type="Gene3D" id="3.40.1380.20">
    <property type="entry name" value="Pyruvate kinase, C-terminal domain"/>
    <property type="match status" value="1"/>
</dbReference>
<dbReference type="InterPro" id="IPR001697">
    <property type="entry name" value="Pyr_Knase"/>
</dbReference>
<dbReference type="InterPro" id="IPR015813">
    <property type="entry name" value="Pyrv/PenolPyrv_kinase-like_dom"/>
</dbReference>
<dbReference type="InterPro" id="IPR040442">
    <property type="entry name" value="Pyrv_kinase-like_dom_sf"/>
</dbReference>
<dbReference type="InterPro" id="IPR011037">
    <property type="entry name" value="Pyrv_Knase-like_insert_dom_sf"/>
</dbReference>
<dbReference type="InterPro" id="IPR018209">
    <property type="entry name" value="Pyrv_Knase_AS"/>
</dbReference>
<dbReference type="InterPro" id="IPR015793">
    <property type="entry name" value="Pyrv_Knase_brl"/>
</dbReference>
<dbReference type="InterPro" id="IPR015795">
    <property type="entry name" value="Pyrv_Knase_C"/>
</dbReference>
<dbReference type="InterPro" id="IPR036918">
    <property type="entry name" value="Pyrv_Knase_C_sf"/>
</dbReference>
<dbReference type="InterPro" id="IPR015806">
    <property type="entry name" value="Pyrv_Knase_insert_dom_sf"/>
</dbReference>
<dbReference type="NCBIfam" id="NF004491">
    <property type="entry name" value="PRK05826.1"/>
    <property type="match status" value="1"/>
</dbReference>
<dbReference type="NCBIfam" id="NF004978">
    <property type="entry name" value="PRK06354.1"/>
    <property type="match status" value="1"/>
</dbReference>
<dbReference type="NCBIfam" id="TIGR01064">
    <property type="entry name" value="pyruv_kin"/>
    <property type="match status" value="1"/>
</dbReference>
<dbReference type="PANTHER" id="PTHR11817">
    <property type="entry name" value="PYRUVATE KINASE"/>
    <property type="match status" value="1"/>
</dbReference>
<dbReference type="Pfam" id="PF00224">
    <property type="entry name" value="PK"/>
    <property type="match status" value="1"/>
</dbReference>
<dbReference type="Pfam" id="PF02887">
    <property type="entry name" value="PK_C"/>
    <property type="match status" value="1"/>
</dbReference>
<dbReference type="PRINTS" id="PR01050">
    <property type="entry name" value="PYRUVTKNASE"/>
</dbReference>
<dbReference type="SUPFAM" id="SSF51621">
    <property type="entry name" value="Phosphoenolpyruvate/pyruvate domain"/>
    <property type="match status" value="1"/>
</dbReference>
<dbReference type="SUPFAM" id="SSF50800">
    <property type="entry name" value="PK beta-barrel domain-like"/>
    <property type="match status" value="1"/>
</dbReference>
<dbReference type="SUPFAM" id="SSF52935">
    <property type="entry name" value="PK C-terminal domain-like"/>
    <property type="match status" value="1"/>
</dbReference>
<dbReference type="PROSITE" id="PS00110">
    <property type="entry name" value="PYRUVATE_KINASE"/>
    <property type="match status" value="1"/>
</dbReference>
<protein>
    <recommendedName>
        <fullName>Pyruvate kinase</fullName>
        <shortName>PK</shortName>
        <ecNumber>2.7.1.40</ecNumber>
    </recommendedName>
</protein>
<accession>O44006</accession>
<comment type="catalytic activity">
    <reaction>
        <text>pyruvate + ATP = phosphoenolpyruvate + ADP + H(+)</text>
        <dbReference type="Rhea" id="RHEA:18157"/>
        <dbReference type="ChEBI" id="CHEBI:15361"/>
        <dbReference type="ChEBI" id="CHEBI:15378"/>
        <dbReference type="ChEBI" id="CHEBI:30616"/>
        <dbReference type="ChEBI" id="CHEBI:58702"/>
        <dbReference type="ChEBI" id="CHEBI:456216"/>
        <dbReference type="EC" id="2.7.1.40"/>
    </reaction>
</comment>
<comment type="cofactor">
    <cofactor>
        <name>Mg(2+)</name>
        <dbReference type="ChEBI" id="CHEBI:18420"/>
    </cofactor>
</comment>
<comment type="cofactor">
    <cofactor>
        <name>K(+)</name>
        <dbReference type="ChEBI" id="CHEBI:29103"/>
    </cofactor>
</comment>
<comment type="pathway">
    <text>Carbohydrate degradation; glycolysis; pyruvate from D-glyceraldehyde 3-phosphate: step 5/5.</text>
</comment>
<comment type="subunit">
    <text evidence="1">Homotetramer.</text>
</comment>
<comment type="similarity">
    <text evidence="3">Belongs to the pyruvate kinase family.</text>
</comment>
<keyword id="KW-0067">ATP-binding</keyword>
<keyword id="KW-0324">Glycolysis</keyword>
<keyword id="KW-0418">Kinase</keyword>
<keyword id="KW-0460">Magnesium</keyword>
<keyword id="KW-0479">Metal-binding</keyword>
<keyword id="KW-0547">Nucleotide-binding</keyword>
<keyword id="KW-0630">Potassium</keyword>
<keyword id="KW-0670">Pyruvate</keyword>
<keyword id="KW-0808">Transferase</keyword>
<proteinExistence type="evidence at transcript level"/>